<protein>
    <recommendedName>
        <fullName evidence="1">Putative pterin-4-alpha-carbinolamine dehydratase</fullName>
        <shortName evidence="1">PHS</shortName>
        <ecNumber evidence="1">4.2.1.96</ecNumber>
    </recommendedName>
    <alternativeName>
        <fullName evidence="1">4-alpha-hydroxy-tetrahydropterin dehydratase</fullName>
    </alternativeName>
    <alternativeName>
        <fullName evidence="1">Pterin carbinolamine dehydratase</fullName>
        <shortName evidence="1">PCD</shortName>
    </alternativeName>
</protein>
<feature type="chain" id="PRO_1000192941" description="Putative pterin-4-alpha-carbinolamine dehydratase">
    <location>
        <begin position="1"/>
        <end position="92"/>
    </location>
</feature>
<accession>B1XN71</accession>
<comment type="catalytic activity">
    <reaction evidence="1">
        <text>(4aS,6R)-4a-hydroxy-L-erythro-5,6,7,8-tetrahydrobiopterin = (6R)-L-erythro-6,7-dihydrobiopterin + H2O</text>
        <dbReference type="Rhea" id="RHEA:11920"/>
        <dbReference type="ChEBI" id="CHEBI:15377"/>
        <dbReference type="ChEBI" id="CHEBI:15642"/>
        <dbReference type="ChEBI" id="CHEBI:43120"/>
        <dbReference type="EC" id="4.2.1.96"/>
    </reaction>
</comment>
<comment type="similarity">
    <text evidence="1">Belongs to the pterin-4-alpha-carbinolamine dehydratase family.</text>
</comment>
<keyword id="KW-0456">Lyase</keyword>
<keyword id="KW-1185">Reference proteome</keyword>
<evidence type="ECO:0000255" key="1">
    <source>
        <dbReference type="HAMAP-Rule" id="MF_00434"/>
    </source>
</evidence>
<proteinExistence type="inferred from homology"/>
<reference key="1">
    <citation type="submission" date="2008-02" db="EMBL/GenBank/DDBJ databases">
        <title>Complete sequence of Synechococcus sp. PCC 7002.</title>
        <authorList>
            <person name="Li T."/>
            <person name="Zhao J."/>
            <person name="Zhao C."/>
            <person name="Liu Z."/>
            <person name="Zhao F."/>
            <person name="Marquardt J."/>
            <person name="Nomura C.T."/>
            <person name="Persson S."/>
            <person name="Detter J.C."/>
            <person name="Richardson P.M."/>
            <person name="Lanz C."/>
            <person name="Schuster S.C."/>
            <person name="Wang J."/>
            <person name="Li S."/>
            <person name="Huang X."/>
            <person name="Cai T."/>
            <person name="Yu Z."/>
            <person name="Luo J."/>
            <person name="Zhao J."/>
            <person name="Bryant D.A."/>
        </authorList>
    </citation>
    <scope>NUCLEOTIDE SEQUENCE [LARGE SCALE GENOMIC DNA]</scope>
    <source>
        <strain>ATCC 27264 / PCC 7002 / PR-6</strain>
    </source>
</reference>
<name>PHS_PICP2</name>
<gene>
    <name type="ordered locus">SYNPCC7002_A2812</name>
</gene>
<sequence>MATRLTDTEIQAQLSQFPEWSKVDNKIQRRFKFKNFIEAIDFVNKLVEPAEAADHHPDIEISYNKVTVNLTTHDAGGLTQKDFDLAGTFDQL</sequence>
<dbReference type="EC" id="4.2.1.96" evidence="1"/>
<dbReference type="EMBL" id="CP000951">
    <property type="protein sequence ID" value="ACB00781.1"/>
    <property type="molecule type" value="Genomic_DNA"/>
</dbReference>
<dbReference type="RefSeq" id="WP_012308399.1">
    <property type="nucleotide sequence ID" value="NZ_JAHHPU010000014.1"/>
</dbReference>
<dbReference type="SMR" id="B1XN71"/>
<dbReference type="STRING" id="32049.SYNPCC7002_A2812"/>
<dbReference type="KEGG" id="syp:SYNPCC7002_A2812"/>
<dbReference type="eggNOG" id="COG2154">
    <property type="taxonomic scope" value="Bacteria"/>
</dbReference>
<dbReference type="HOGENOM" id="CLU_081974_4_0_3"/>
<dbReference type="Proteomes" id="UP000001688">
    <property type="component" value="Chromosome"/>
</dbReference>
<dbReference type="GO" id="GO:0008124">
    <property type="term" value="F:4-alpha-hydroxytetrahydrobiopterin dehydratase activity"/>
    <property type="evidence" value="ECO:0007669"/>
    <property type="project" value="UniProtKB-UniRule"/>
</dbReference>
<dbReference type="GO" id="GO:0006729">
    <property type="term" value="P:tetrahydrobiopterin biosynthetic process"/>
    <property type="evidence" value="ECO:0007669"/>
    <property type="project" value="InterPro"/>
</dbReference>
<dbReference type="CDD" id="cd00488">
    <property type="entry name" value="PCD_DCoH"/>
    <property type="match status" value="1"/>
</dbReference>
<dbReference type="Gene3D" id="3.30.1360.20">
    <property type="entry name" value="Transcriptional coactivator/pterin dehydratase"/>
    <property type="match status" value="1"/>
</dbReference>
<dbReference type="HAMAP" id="MF_00434">
    <property type="entry name" value="Pterin_4_alpha"/>
    <property type="match status" value="1"/>
</dbReference>
<dbReference type="InterPro" id="IPR036428">
    <property type="entry name" value="PCD_sf"/>
</dbReference>
<dbReference type="InterPro" id="IPR001533">
    <property type="entry name" value="Pterin_deHydtase"/>
</dbReference>
<dbReference type="NCBIfam" id="NF002017">
    <property type="entry name" value="PRK00823.1-2"/>
    <property type="match status" value="1"/>
</dbReference>
<dbReference type="PANTHER" id="PTHR12599">
    <property type="entry name" value="PTERIN-4-ALPHA-CARBINOLAMINE DEHYDRATASE"/>
    <property type="match status" value="1"/>
</dbReference>
<dbReference type="PANTHER" id="PTHR12599:SF0">
    <property type="entry name" value="PTERIN-4-ALPHA-CARBINOLAMINE DEHYDRATASE"/>
    <property type="match status" value="1"/>
</dbReference>
<dbReference type="Pfam" id="PF01329">
    <property type="entry name" value="Pterin_4a"/>
    <property type="match status" value="1"/>
</dbReference>
<dbReference type="SUPFAM" id="SSF55248">
    <property type="entry name" value="PCD-like"/>
    <property type="match status" value="1"/>
</dbReference>
<organism>
    <name type="scientific">Picosynechococcus sp. (strain ATCC 27264 / PCC 7002 / PR-6)</name>
    <name type="common">Agmenellum quadruplicatum</name>
    <dbReference type="NCBI Taxonomy" id="32049"/>
    <lineage>
        <taxon>Bacteria</taxon>
        <taxon>Bacillati</taxon>
        <taxon>Cyanobacteriota</taxon>
        <taxon>Cyanophyceae</taxon>
        <taxon>Oscillatoriophycideae</taxon>
        <taxon>Chroococcales</taxon>
        <taxon>Geminocystaceae</taxon>
        <taxon>Picosynechococcus</taxon>
    </lineage>
</organism>